<name>TGT_ACIF5</name>
<evidence type="ECO:0000255" key="1">
    <source>
        <dbReference type="HAMAP-Rule" id="MF_00168"/>
    </source>
</evidence>
<dbReference type="EC" id="2.4.2.29" evidence="1"/>
<dbReference type="EMBL" id="CP001132">
    <property type="protein sequence ID" value="ACH83939.1"/>
    <property type="molecule type" value="Genomic_DNA"/>
</dbReference>
<dbReference type="RefSeq" id="WP_012536938.1">
    <property type="nucleotide sequence ID" value="NC_011206.1"/>
</dbReference>
<dbReference type="SMR" id="B5EK08"/>
<dbReference type="GeneID" id="65281195"/>
<dbReference type="KEGG" id="afe:Lferr_1717"/>
<dbReference type="eggNOG" id="COG0343">
    <property type="taxonomic scope" value="Bacteria"/>
</dbReference>
<dbReference type="HOGENOM" id="CLU_022060_0_1_6"/>
<dbReference type="UniPathway" id="UPA00392"/>
<dbReference type="GO" id="GO:0005829">
    <property type="term" value="C:cytosol"/>
    <property type="evidence" value="ECO:0007669"/>
    <property type="project" value="TreeGrafter"/>
</dbReference>
<dbReference type="GO" id="GO:0046872">
    <property type="term" value="F:metal ion binding"/>
    <property type="evidence" value="ECO:0007669"/>
    <property type="project" value="UniProtKB-KW"/>
</dbReference>
<dbReference type="GO" id="GO:0008479">
    <property type="term" value="F:tRNA-guanosine(34) queuine transglycosylase activity"/>
    <property type="evidence" value="ECO:0007669"/>
    <property type="project" value="UniProtKB-UniRule"/>
</dbReference>
<dbReference type="GO" id="GO:0008616">
    <property type="term" value="P:queuosine biosynthetic process"/>
    <property type="evidence" value="ECO:0007669"/>
    <property type="project" value="UniProtKB-UniRule"/>
</dbReference>
<dbReference type="GO" id="GO:0002099">
    <property type="term" value="P:tRNA wobble guanine modification"/>
    <property type="evidence" value="ECO:0007669"/>
    <property type="project" value="TreeGrafter"/>
</dbReference>
<dbReference type="GO" id="GO:0101030">
    <property type="term" value="P:tRNA-guanine transglycosylation"/>
    <property type="evidence" value="ECO:0007669"/>
    <property type="project" value="InterPro"/>
</dbReference>
<dbReference type="FunFam" id="3.20.20.105:FF:000001">
    <property type="entry name" value="Queuine tRNA-ribosyltransferase"/>
    <property type="match status" value="1"/>
</dbReference>
<dbReference type="Gene3D" id="3.20.20.105">
    <property type="entry name" value="Queuine tRNA-ribosyltransferase-like"/>
    <property type="match status" value="1"/>
</dbReference>
<dbReference type="HAMAP" id="MF_00168">
    <property type="entry name" value="Q_tRNA_Tgt"/>
    <property type="match status" value="1"/>
</dbReference>
<dbReference type="InterPro" id="IPR050076">
    <property type="entry name" value="ArchSynthase1/Queuine_TRR"/>
</dbReference>
<dbReference type="InterPro" id="IPR004803">
    <property type="entry name" value="TGT"/>
</dbReference>
<dbReference type="InterPro" id="IPR036511">
    <property type="entry name" value="TGT-like_sf"/>
</dbReference>
<dbReference type="InterPro" id="IPR002616">
    <property type="entry name" value="tRNA_ribo_trans-like"/>
</dbReference>
<dbReference type="NCBIfam" id="TIGR00430">
    <property type="entry name" value="Q_tRNA_tgt"/>
    <property type="match status" value="1"/>
</dbReference>
<dbReference type="NCBIfam" id="TIGR00449">
    <property type="entry name" value="tgt_general"/>
    <property type="match status" value="1"/>
</dbReference>
<dbReference type="PANTHER" id="PTHR46499">
    <property type="entry name" value="QUEUINE TRNA-RIBOSYLTRANSFERASE"/>
    <property type="match status" value="1"/>
</dbReference>
<dbReference type="PANTHER" id="PTHR46499:SF1">
    <property type="entry name" value="QUEUINE TRNA-RIBOSYLTRANSFERASE"/>
    <property type="match status" value="1"/>
</dbReference>
<dbReference type="Pfam" id="PF01702">
    <property type="entry name" value="TGT"/>
    <property type="match status" value="1"/>
</dbReference>
<dbReference type="SUPFAM" id="SSF51713">
    <property type="entry name" value="tRNA-guanine transglycosylase"/>
    <property type="match status" value="1"/>
</dbReference>
<feature type="chain" id="PRO_1000097526" description="Queuine tRNA-ribosyltransferase">
    <location>
        <begin position="1"/>
        <end position="371"/>
    </location>
</feature>
<feature type="region of interest" description="RNA binding" evidence="1">
    <location>
        <begin position="243"/>
        <end position="249"/>
    </location>
</feature>
<feature type="region of interest" description="RNA binding; important for wobble base 34 recognition" evidence="1">
    <location>
        <begin position="267"/>
        <end position="271"/>
    </location>
</feature>
<feature type="active site" description="Proton acceptor" evidence="1">
    <location>
        <position position="90"/>
    </location>
</feature>
<feature type="active site" description="Nucleophile" evidence="1">
    <location>
        <position position="262"/>
    </location>
</feature>
<feature type="binding site" evidence="1">
    <location>
        <begin position="90"/>
        <end position="94"/>
    </location>
    <ligand>
        <name>substrate</name>
    </ligand>
</feature>
<feature type="binding site" evidence="1">
    <location>
        <position position="144"/>
    </location>
    <ligand>
        <name>substrate</name>
    </ligand>
</feature>
<feature type="binding site" evidence="1">
    <location>
        <position position="185"/>
    </location>
    <ligand>
        <name>substrate</name>
    </ligand>
</feature>
<feature type="binding site" evidence="1">
    <location>
        <position position="212"/>
    </location>
    <ligand>
        <name>substrate</name>
    </ligand>
</feature>
<feature type="binding site" evidence="1">
    <location>
        <position position="300"/>
    </location>
    <ligand>
        <name>Zn(2+)</name>
        <dbReference type="ChEBI" id="CHEBI:29105"/>
    </ligand>
</feature>
<feature type="binding site" evidence="1">
    <location>
        <position position="302"/>
    </location>
    <ligand>
        <name>Zn(2+)</name>
        <dbReference type="ChEBI" id="CHEBI:29105"/>
    </ligand>
</feature>
<feature type="binding site" evidence="1">
    <location>
        <position position="305"/>
    </location>
    <ligand>
        <name>Zn(2+)</name>
        <dbReference type="ChEBI" id="CHEBI:29105"/>
    </ligand>
</feature>
<feature type="binding site" evidence="1">
    <location>
        <position position="331"/>
    </location>
    <ligand>
        <name>Zn(2+)</name>
        <dbReference type="ChEBI" id="CHEBI:29105"/>
    </ligand>
</feature>
<reference key="1">
    <citation type="submission" date="2008-08" db="EMBL/GenBank/DDBJ databases">
        <title>Complete sequence of Acidithiobacillus ferrooxidans ATCC 53993.</title>
        <authorList>
            <person name="Lucas S."/>
            <person name="Copeland A."/>
            <person name="Lapidus A."/>
            <person name="Glavina del Rio T."/>
            <person name="Dalin E."/>
            <person name="Tice H."/>
            <person name="Bruce D."/>
            <person name="Goodwin L."/>
            <person name="Pitluck S."/>
            <person name="Sims D."/>
            <person name="Brettin T."/>
            <person name="Detter J.C."/>
            <person name="Han C."/>
            <person name="Kuske C.R."/>
            <person name="Larimer F."/>
            <person name="Land M."/>
            <person name="Hauser L."/>
            <person name="Kyrpides N."/>
            <person name="Lykidis A."/>
            <person name="Borole A.P."/>
        </authorList>
    </citation>
    <scope>NUCLEOTIDE SEQUENCE [LARGE SCALE GENOMIC DNA]</scope>
    <source>
        <strain>ATCC 53993 / BNL-5-31</strain>
    </source>
</reference>
<protein>
    <recommendedName>
        <fullName evidence="1">Queuine tRNA-ribosyltransferase</fullName>
        <ecNumber evidence="1">2.4.2.29</ecNumber>
    </recommendedName>
    <alternativeName>
        <fullName evidence="1">Guanine insertion enzyme</fullName>
    </alternativeName>
    <alternativeName>
        <fullName evidence="1">tRNA-guanine transglycosylase</fullName>
    </alternativeName>
</protein>
<comment type="function">
    <text evidence="1">Catalyzes the base-exchange of a guanine (G) residue with the queuine precursor 7-aminomethyl-7-deazaguanine (PreQ1) at position 34 (anticodon wobble position) in tRNAs with GU(N) anticodons (tRNA-Asp, -Asn, -His and -Tyr). Catalysis occurs through a double-displacement mechanism. The nucleophile active site attacks the C1' of nucleotide 34 to detach the guanine base from the RNA, forming a covalent enzyme-RNA intermediate. The proton acceptor active site deprotonates the incoming PreQ1, allowing a nucleophilic attack on the C1' of the ribose to form the product. After dissociation, two additional enzymatic reactions on the tRNA convert PreQ1 to queuine (Q), resulting in the hypermodified nucleoside queuosine (7-(((4,5-cis-dihydroxy-2-cyclopenten-1-yl)amino)methyl)-7-deazaguanosine).</text>
</comment>
<comment type="catalytic activity">
    <reaction evidence="1">
        <text>7-aminomethyl-7-carbaguanine + guanosine(34) in tRNA = 7-aminomethyl-7-carbaguanosine(34) in tRNA + guanine</text>
        <dbReference type="Rhea" id="RHEA:24104"/>
        <dbReference type="Rhea" id="RHEA-COMP:10341"/>
        <dbReference type="Rhea" id="RHEA-COMP:10342"/>
        <dbReference type="ChEBI" id="CHEBI:16235"/>
        <dbReference type="ChEBI" id="CHEBI:58703"/>
        <dbReference type="ChEBI" id="CHEBI:74269"/>
        <dbReference type="ChEBI" id="CHEBI:82833"/>
        <dbReference type="EC" id="2.4.2.29"/>
    </reaction>
</comment>
<comment type="cofactor">
    <cofactor evidence="1">
        <name>Zn(2+)</name>
        <dbReference type="ChEBI" id="CHEBI:29105"/>
    </cofactor>
    <text evidence="1">Binds 1 zinc ion per subunit.</text>
</comment>
<comment type="pathway">
    <text evidence="1">tRNA modification; tRNA-queuosine biosynthesis.</text>
</comment>
<comment type="subunit">
    <text evidence="1">Homodimer. Within each dimer, one monomer is responsible for RNA recognition and catalysis, while the other monomer binds to the replacement base PreQ1.</text>
</comment>
<comment type="similarity">
    <text evidence="1">Belongs to the queuine tRNA-ribosyltransferase family.</text>
</comment>
<proteinExistence type="inferred from homology"/>
<gene>
    <name evidence="1" type="primary">tgt</name>
    <name type="ordered locus">Lferr_1717</name>
</gene>
<accession>B5EK08</accession>
<organism>
    <name type="scientific">Acidithiobacillus ferrooxidans (strain ATCC 53993 / BNL-5-31)</name>
    <name type="common">Leptospirillum ferrooxidans (ATCC 53993)</name>
    <dbReference type="NCBI Taxonomy" id="380394"/>
    <lineage>
        <taxon>Bacteria</taxon>
        <taxon>Pseudomonadati</taxon>
        <taxon>Pseudomonadota</taxon>
        <taxon>Acidithiobacillia</taxon>
        <taxon>Acidithiobacillales</taxon>
        <taxon>Acidithiobacillaceae</taxon>
        <taxon>Acidithiobacillus</taxon>
    </lineage>
</organism>
<sequence length="371" mass="41070">MSIFQLLARDGAARRGTIRLPRGTVQTPAFMPVGTYGTVKAMSPEELKTLGAEIILGNTFHLFLRPGLEVISAVGGLHRMMHWDRPILTDSGGFQVFSLGALRKLTEAGVQFRAPTDGHMVFLGPEESMQIQAALGSDIAMVFDECTPHPASYEEARVSMELSLRWAARSHAAYAGPGELFGIVQGGMYADLRRRSLAGLQRLDFPGLAIGGLSVGESKVEMMQVLDDLMPHMPADRPRYLMGVGTPEDLVEGVRRGVDMFDCVMPTRNARNGWLFTRDGVLKLRNARYEKDVLPPDPACACYTCQNYSRAYLRHLQRSHEILGARLNTLHNLHYYQELMAGLREAIAAGRLDAYADDFYRRRRAGSLVGA</sequence>
<keyword id="KW-0328">Glycosyltransferase</keyword>
<keyword id="KW-0479">Metal-binding</keyword>
<keyword id="KW-0671">Queuosine biosynthesis</keyword>
<keyword id="KW-0808">Transferase</keyword>
<keyword id="KW-0819">tRNA processing</keyword>
<keyword id="KW-0862">Zinc</keyword>